<organism>
    <name type="scientific">Vibrio atlanticus (strain LGP32)</name>
    <name type="common">Vibrio splendidus (strain Mel32)</name>
    <dbReference type="NCBI Taxonomy" id="575788"/>
    <lineage>
        <taxon>Bacteria</taxon>
        <taxon>Pseudomonadati</taxon>
        <taxon>Pseudomonadota</taxon>
        <taxon>Gammaproteobacteria</taxon>
        <taxon>Vibrionales</taxon>
        <taxon>Vibrionaceae</taxon>
        <taxon>Vibrio</taxon>
    </lineage>
</organism>
<name>ARGA_VIBA3</name>
<reference key="1">
    <citation type="submission" date="2009-02" db="EMBL/GenBank/DDBJ databases">
        <title>Vibrio splendidus str. LGP32 complete genome.</title>
        <authorList>
            <person name="Mazel D."/>
            <person name="Le Roux F."/>
        </authorList>
    </citation>
    <scope>NUCLEOTIDE SEQUENCE [LARGE SCALE GENOMIC DNA]</scope>
    <source>
        <strain>LGP32</strain>
    </source>
</reference>
<dbReference type="EC" id="2.3.1.1" evidence="1"/>
<dbReference type="EMBL" id="FM954972">
    <property type="protein sequence ID" value="CAV17672.1"/>
    <property type="molecule type" value="Genomic_DNA"/>
</dbReference>
<dbReference type="SMR" id="B7VJZ6"/>
<dbReference type="STRING" id="575788.VS_0678"/>
<dbReference type="KEGG" id="vsp:VS_0678"/>
<dbReference type="PATRIC" id="fig|575788.5.peg.2027"/>
<dbReference type="eggNOG" id="COG0548">
    <property type="taxonomic scope" value="Bacteria"/>
</dbReference>
<dbReference type="eggNOG" id="COG1246">
    <property type="taxonomic scope" value="Bacteria"/>
</dbReference>
<dbReference type="HOGENOM" id="CLU_024773_0_0_6"/>
<dbReference type="UniPathway" id="UPA00068">
    <property type="reaction ID" value="UER00106"/>
</dbReference>
<dbReference type="Proteomes" id="UP000009100">
    <property type="component" value="Chromosome 1"/>
</dbReference>
<dbReference type="GO" id="GO:0005737">
    <property type="term" value="C:cytoplasm"/>
    <property type="evidence" value="ECO:0007669"/>
    <property type="project" value="UniProtKB-SubCell"/>
</dbReference>
<dbReference type="GO" id="GO:0004042">
    <property type="term" value="F:L-glutamate N-acetyltransferase activity"/>
    <property type="evidence" value="ECO:0007669"/>
    <property type="project" value="UniProtKB-UniRule"/>
</dbReference>
<dbReference type="GO" id="GO:0006526">
    <property type="term" value="P:L-arginine biosynthetic process"/>
    <property type="evidence" value="ECO:0007669"/>
    <property type="project" value="UniProtKB-UniRule"/>
</dbReference>
<dbReference type="CDD" id="cd04237">
    <property type="entry name" value="AAK_NAGS-ABP"/>
    <property type="match status" value="1"/>
</dbReference>
<dbReference type="CDD" id="cd04301">
    <property type="entry name" value="NAT_SF"/>
    <property type="match status" value="1"/>
</dbReference>
<dbReference type="FunFam" id="3.40.1160.10:FF:000005">
    <property type="entry name" value="Amino-acid acetyltransferase"/>
    <property type="match status" value="1"/>
</dbReference>
<dbReference type="Gene3D" id="3.40.630.30">
    <property type="match status" value="1"/>
</dbReference>
<dbReference type="Gene3D" id="3.40.1160.10">
    <property type="entry name" value="Acetylglutamate kinase-like"/>
    <property type="match status" value="1"/>
</dbReference>
<dbReference type="HAMAP" id="MF_01105">
    <property type="entry name" value="N_acetyl_glu_synth"/>
    <property type="match status" value="1"/>
</dbReference>
<dbReference type="InterPro" id="IPR036393">
    <property type="entry name" value="AceGlu_kinase-like_sf"/>
</dbReference>
<dbReference type="InterPro" id="IPR016181">
    <property type="entry name" value="Acyl_CoA_acyltransferase"/>
</dbReference>
<dbReference type="InterPro" id="IPR001048">
    <property type="entry name" value="Asp/Glu/Uridylate_kinase"/>
</dbReference>
<dbReference type="InterPro" id="IPR000182">
    <property type="entry name" value="GNAT_dom"/>
</dbReference>
<dbReference type="InterPro" id="IPR033719">
    <property type="entry name" value="NAGS_kin"/>
</dbReference>
<dbReference type="InterPro" id="IPR010167">
    <property type="entry name" value="NH2A_AcTrfase"/>
</dbReference>
<dbReference type="NCBIfam" id="TIGR01890">
    <property type="entry name" value="N-Ac-Glu-synth"/>
    <property type="match status" value="1"/>
</dbReference>
<dbReference type="NCBIfam" id="NF003641">
    <property type="entry name" value="PRK05279.1"/>
    <property type="match status" value="1"/>
</dbReference>
<dbReference type="PANTHER" id="PTHR30602">
    <property type="entry name" value="AMINO-ACID ACETYLTRANSFERASE"/>
    <property type="match status" value="1"/>
</dbReference>
<dbReference type="PANTHER" id="PTHR30602:SF12">
    <property type="entry name" value="AMINO-ACID ACETYLTRANSFERASE NAGS1, CHLOROPLASTIC-RELATED"/>
    <property type="match status" value="1"/>
</dbReference>
<dbReference type="Pfam" id="PF00696">
    <property type="entry name" value="AA_kinase"/>
    <property type="match status" value="1"/>
</dbReference>
<dbReference type="Pfam" id="PF00583">
    <property type="entry name" value="Acetyltransf_1"/>
    <property type="match status" value="1"/>
</dbReference>
<dbReference type="PIRSF" id="PIRSF000423">
    <property type="entry name" value="ArgA"/>
    <property type="match status" value="1"/>
</dbReference>
<dbReference type="SUPFAM" id="SSF55729">
    <property type="entry name" value="Acyl-CoA N-acyltransferases (Nat)"/>
    <property type="match status" value="1"/>
</dbReference>
<dbReference type="SUPFAM" id="SSF53633">
    <property type="entry name" value="Carbamate kinase-like"/>
    <property type="match status" value="1"/>
</dbReference>
<dbReference type="PROSITE" id="PS51186">
    <property type="entry name" value="GNAT"/>
    <property type="match status" value="1"/>
</dbReference>
<sequence length="445" mass="49309">MKLRSTALVKGFRQSTPYVNAHRGKTMVIMLGGEAVADRNFGNIISDIALLHSLGVKIVLVHGARPQINQLLEKQDCHTPYHKNIRVTDEYSLGVAMQAAGQLQLAITARLSMSLNNTPMAGTQLNVMSGNFITAQPLGVDDGTDYCHSGRIRRIDIEGINRTLDQGSIVLLGPIASSVTGESFNLLSEEVATQVAIRLKADKLIGFCSEQGVTDESGNVLAELFPKDAKQILERLTESQNPAEDMSTGTLRFLKGAISACRAGVPRCHLISYKVDGALIQELFSFDGIGTQVVMASAEQVRQAQIDDIGGIFDLIRPLEEQGILVRRSREQLEQEVHRFTIIEKDGLIIGCAALYAYPEDHMAEMACVAIHPDYRDGNRGQILLDYMRHQSKSRDIDQIFVLTTHSLHWFREQGFYEIAVDELPMEKQGLYNYQRNSKILALNV</sequence>
<evidence type="ECO:0000255" key="1">
    <source>
        <dbReference type="HAMAP-Rule" id="MF_01105"/>
    </source>
</evidence>
<comment type="catalytic activity">
    <reaction evidence="1">
        <text>L-glutamate + acetyl-CoA = N-acetyl-L-glutamate + CoA + H(+)</text>
        <dbReference type="Rhea" id="RHEA:24292"/>
        <dbReference type="ChEBI" id="CHEBI:15378"/>
        <dbReference type="ChEBI" id="CHEBI:29985"/>
        <dbReference type="ChEBI" id="CHEBI:44337"/>
        <dbReference type="ChEBI" id="CHEBI:57287"/>
        <dbReference type="ChEBI" id="CHEBI:57288"/>
        <dbReference type="EC" id="2.3.1.1"/>
    </reaction>
</comment>
<comment type="pathway">
    <text evidence="1">Amino-acid biosynthesis; L-arginine biosynthesis; N(2)-acetyl-L-ornithine from L-glutamate: step 1/4.</text>
</comment>
<comment type="subcellular location">
    <subcellularLocation>
        <location evidence="1">Cytoplasm</location>
    </subcellularLocation>
</comment>
<comment type="similarity">
    <text evidence="1">Belongs to the acetyltransferase family. ArgA subfamily.</text>
</comment>
<proteinExistence type="inferred from homology"/>
<gene>
    <name evidence="1" type="primary">argA</name>
    <name type="ordered locus">VS_0678</name>
</gene>
<accession>B7VJZ6</accession>
<feature type="chain" id="PRO_1000163950" description="Amino-acid acetyltransferase">
    <location>
        <begin position="1"/>
        <end position="445"/>
    </location>
</feature>
<feature type="domain" description="N-acetyltransferase" evidence="1">
    <location>
        <begin position="299"/>
        <end position="438"/>
    </location>
</feature>
<keyword id="KW-0012">Acyltransferase</keyword>
<keyword id="KW-0028">Amino-acid biosynthesis</keyword>
<keyword id="KW-0055">Arginine biosynthesis</keyword>
<keyword id="KW-0963">Cytoplasm</keyword>
<keyword id="KW-0808">Transferase</keyword>
<protein>
    <recommendedName>
        <fullName evidence="1">Amino-acid acetyltransferase</fullName>
        <ecNumber evidence="1">2.3.1.1</ecNumber>
    </recommendedName>
    <alternativeName>
        <fullName evidence="1">N-acetylglutamate synthase</fullName>
        <shortName evidence="1">AGS</shortName>
        <shortName evidence="1">NAGS</shortName>
    </alternativeName>
</protein>